<reference key="1">
    <citation type="journal article" date="2004" name="Proc. Natl. Acad. Sci. U.S.A.">
        <title>The diploid genome sequence of Candida albicans.</title>
        <authorList>
            <person name="Jones T."/>
            <person name="Federspiel N.A."/>
            <person name="Chibana H."/>
            <person name="Dungan J."/>
            <person name="Kalman S."/>
            <person name="Magee B.B."/>
            <person name="Newport G."/>
            <person name="Thorstenson Y.R."/>
            <person name="Agabian N."/>
            <person name="Magee P.T."/>
            <person name="Davis R.W."/>
            <person name="Scherer S."/>
        </authorList>
    </citation>
    <scope>NUCLEOTIDE SEQUENCE [LARGE SCALE GENOMIC DNA]</scope>
    <source>
        <strain>SC5314 / ATCC MYA-2876</strain>
    </source>
</reference>
<reference key="2">
    <citation type="journal article" date="2007" name="Genome Biol.">
        <title>Assembly of the Candida albicans genome into sixteen supercontigs aligned on the eight chromosomes.</title>
        <authorList>
            <person name="van het Hoog M."/>
            <person name="Rast T.J."/>
            <person name="Martchenko M."/>
            <person name="Grindle S."/>
            <person name="Dignard D."/>
            <person name="Hogues H."/>
            <person name="Cuomo C."/>
            <person name="Berriman M."/>
            <person name="Scherer S."/>
            <person name="Magee B.B."/>
            <person name="Whiteway M."/>
            <person name="Chibana H."/>
            <person name="Nantel A."/>
            <person name="Magee P.T."/>
        </authorList>
    </citation>
    <scope>GENOME REANNOTATION</scope>
    <source>
        <strain>SC5314 / ATCC MYA-2876</strain>
    </source>
</reference>
<reference key="3">
    <citation type="journal article" date="2013" name="Genome Biol.">
        <title>Assembly of a phased diploid Candida albicans genome facilitates allele-specific measurements and provides a simple model for repeat and indel structure.</title>
        <authorList>
            <person name="Muzzey D."/>
            <person name="Schwartz K."/>
            <person name="Weissman J.S."/>
            <person name="Sherlock G."/>
        </authorList>
    </citation>
    <scope>NUCLEOTIDE SEQUENCE [LARGE SCALE GENOMIC DNA]</scope>
    <scope>GENOME REANNOTATION</scope>
    <source>
        <strain>SC5314 / ATCC MYA-2876</strain>
    </source>
</reference>
<reference key="4">
    <citation type="journal article" date="2002" name="Mol. Biol. Cell">
        <title>Transcription profiling of Candida albicans cells undergoing the yeast-to-hyphal transition.</title>
        <authorList>
            <person name="Nantel A."/>
            <person name="Dignard D."/>
            <person name="Bachewich C."/>
            <person name="Harcus D."/>
            <person name="Marcil A."/>
            <person name="Bouin A.P."/>
            <person name="Sensen C.W."/>
            <person name="Hogues H."/>
            <person name="van het Hoog M."/>
            <person name="Gordon P."/>
            <person name="Rigby T."/>
            <person name="Benoit F."/>
            <person name="Tessier D.C."/>
            <person name="Thomas D.Y."/>
            <person name="Whiteway M."/>
        </authorList>
    </citation>
    <scope>INDUCTION</scope>
</reference>
<reference key="5">
    <citation type="journal article" date="2004" name="Antimicrob. Agents Chemother.">
        <title>Comparison of gene expression profiles of Candida albicans azole-resistant clinical isolates and laboratory strains exposed to drugs inducing multidrug transporters.</title>
        <authorList>
            <person name="Karababa M."/>
            <person name="Coste A.T."/>
            <person name="Rognon B."/>
            <person name="Bille J."/>
            <person name="Sanglard D."/>
        </authorList>
    </citation>
    <scope>INDUCTION</scope>
</reference>
<reference key="6">
    <citation type="journal article" date="2004" name="J. Antimicrob. Chemother.">
        <title>Genome-wide expression profiling reveals genes associated with amphotericin B and fluconazole resistance in experimentally induced antifungal resistant isolates of Candida albicans.</title>
        <authorList>
            <person name="Barker K.S."/>
            <person name="Crisp S."/>
            <person name="Wiederhold N."/>
            <person name="Lewis R.E."/>
            <person name="Bareither B."/>
            <person name="Eckstein J."/>
            <person name="Barbuch R."/>
            <person name="Bard M."/>
            <person name="Rogers P.D."/>
        </authorList>
    </citation>
    <scope>INDUCTION</scope>
</reference>
<reference key="7">
    <citation type="journal article" date="2005" name="Antimicrob. Agents Chemother.">
        <title>Genome-wide expression profiling of the response to azole, polyene, echinocandin, and pyrimidine antifungal agents in Candida albicans.</title>
        <authorList>
            <person name="Liu T.T."/>
            <person name="Lee R.E."/>
            <person name="Barker K.S."/>
            <person name="Lee R.E."/>
            <person name="Wei L."/>
            <person name="Homayouni R."/>
            <person name="Rogers P.D."/>
        </authorList>
    </citation>
    <scope>INDUCTION</scope>
</reference>
<reference key="8">
    <citation type="journal article" date="2005" name="Eukaryot. Cell">
        <title>Unique aspects of gene expression during Candida albicans mating and possible G(1) dependency.</title>
        <authorList>
            <person name="Zhao R."/>
            <person name="Daniels K.J."/>
            <person name="Lockhart S.R."/>
            <person name="Yeater K.M."/>
            <person name="Hoyer L.L."/>
            <person name="Soll D.R."/>
        </authorList>
    </citation>
    <scope>INDUCTION</scope>
</reference>
<reference key="9">
    <citation type="journal article" date="2007" name="Yeast">
        <title>Regulation of sugar transport and metabolism by the Candida albicans Rgt1 transcriptional repressor.</title>
        <authorList>
            <person name="Sexton J.A."/>
            <person name="Brown V."/>
            <person name="Johnston M."/>
        </authorList>
    </citation>
    <scope>INDUCTION</scope>
</reference>
<reference key="10">
    <citation type="journal article" date="2009" name="PLoS Pathog.">
        <title>Transcriptional regulation of carbohydrate metabolism in the human pathogen Candida albicans.</title>
        <authorList>
            <person name="Askew C."/>
            <person name="Sellam A."/>
            <person name="Epp E."/>
            <person name="Hogues H."/>
            <person name="Mullick A."/>
            <person name="Nantel A."/>
            <person name="Whiteway M."/>
        </authorList>
    </citation>
    <scope>FUNCTION</scope>
    <scope>DNA-BINDING</scope>
</reference>
<reference key="11">
    <citation type="journal article" date="2011" name="Mol. Microbiol.">
        <title>Contribution of the glycolytic flux and hypoxia adaptation to efficient biofilm formation by Candida albicans.</title>
        <authorList>
            <person name="Bonhomme J."/>
            <person name="Chauvel M."/>
            <person name="Goyard S."/>
            <person name="Roux P."/>
            <person name="Rossignol T."/>
            <person name="d'Enfert C."/>
        </authorList>
    </citation>
    <scope>FUNCTION</scope>
</reference>
<dbReference type="EMBL" id="CP017623">
    <property type="protein sequence ID" value="AOW26923.1"/>
    <property type="molecule type" value="Genomic_DNA"/>
</dbReference>
<dbReference type="RefSeq" id="XP_722152.1">
    <property type="nucleotide sequence ID" value="XM_717059.1"/>
</dbReference>
<dbReference type="SMR" id="Q5AL36"/>
<dbReference type="FunCoup" id="Q5AL36">
    <property type="interactions" value="1104"/>
</dbReference>
<dbReference type="STRING" id="237561.Q5AL36"/>
<dbReference type="EnsemblFungi" id="C1_13140C_A-T">
    <property type="protein sequence ID" value="C1_13140C_A-T-p1"/>
    <property type="gene ID" value="C1_13140C_A"/>
</dbReference>
<dbReference type="GeneID" id="3636203"/>
<dbReference type="KEGG" id="cal:CAALFM_C113140CA"/>
<dbReference type="CGD" id="CAL0000180094">
    <property type="gene designation" value="TYE7"/>
</dbReference>
<dbReference type="VEuPathDB" id="FungiDB:C1_13140C_A"/>
<dbReference type="eggNOG" id="KOG2588">
    <property type="taxonomic scope" value="Eukaryota"/>
</dbReference>
<dbReference type="HOGENOM" id="CLU_067895_1_0_1"/>
<dbReference type="InParanoid" id="Q5AL36"/>
<dbReference type="OMA" id="SQKKAHN"/>
<dbReference type="OrthoDB" id="2133190at2759"/>
<dbReference type="PHI-base" id="PHI:2865"/>
<dbReference type="PRO" id="PR:Q5AL36"/>
<dbReference type="Proteomes" id="UP000000559">
    <property type="component" value="Chromosome 1"/>
</dbReference>
<dbReference type="GO" id="GO:0000785">
    <property type="term" value="C:chromatin"/>
    <property type="evidence" value="ECO:0000318"/>
    <property type="project" value="GO_Central"/>
</dbReference>
<dbReference type="GO" id="GO:0005634">
    <property type="term" value="C:nucleus"/>
    <property type="evidence" value="ECO:0000318"/>
    <property type="project" value="GO_Central"/>
</dbReference>
<dbReference type="GO" id="GO:0001216">
    <property type="term" value="F:DNA-binding transcription activator activity"/>
    <property type="evidence" value="ECO:0000318"/>
    <property type="project" value="GO_Central"/>
</dbReference>
<dbReference type="GO" id="GO:0003700">
    <property type="term" value="F:DNA-binding transcription factor activity"/>
    <property type="evidence" value="ECO:0000314"/>
    <property type="project" value="CGD"/>
</dbReference>
<dbReference type="GO" id="GO:0046983">
    <property type="term" value="F:protein dimerization activity"/>
    <property type="evidence" value="ECO:0007669"/>
    <property type="project" value="InterPro"/>
</dbReference>
<dbReference type="GO" id="GO:0000978">
    <property type="term" value="F:RNA polymerase II cis-regulatory region sequence-specific DNA binding"/>
    <property type="evidence" value="ECO:0000318"/>
    <property type="project" value="GO_Central"/>
</dbReference>
<dbReference type="GO" id="GO:0043565">
    <property type="term" value="F:sequence-specific DNA binding"/>
    <property type="evidence" value="ECO:0000314"/>
    <property type="project" value="CGD"/>
</dbReference>
<dbReference type="GO" id="GO:0045991">
    <property type="term" value="P:carbon catabolite activation of transcription"/>
    <property type="evidence" value="ECO:0000315"/>
    <property type="project" value="CGD"/>
</dbReference>
<dbReference type="GO" id="GO:0071456">
    <property type="term" value="P:cellular response to hypoxia"/>
    <property type="evidence" value="ECO:0000315"/>
    <property type="project" value="CGD"/>
</dbReference>
<dbReference type="GO" id="GO:0030447">
    <property type="term" value="P:filamentous growth"/>
    <property type="evidence" value="ECO:0000315"/>
    <property type="project" value="CGD"/>
</dbReference>
<dbReference type="GO" id="GO:0044182">
    <property type="term" value="P:filamentous growth of a population of unicellular organisms"/>
    <property type="evidence" value="ECO:0000315"/>
    <property type="project" value="CGD"/>
</dbReference>
<dbReference type="GO" id="GO:1900429">
    <property type="term" value="P:negative regulation of filamentous growth of a population of unicellular organisms"/>
    <property type="evidence" value="ECO:0000315"/>
    <property type="project" value="CGD"/>
</dbReference>
<dbReference type="GO" id="GO:0045821">
    <property type="term" value="P:positive regulation of glycolytic process"/>
    <property type="evidence" value="ECO:0000315"/>
    <property type="project" value="CGD"/>
</dbReference>
<dbReference type="GO" id="GO:1900233">
    <property type="term" value="P:positive regulation of single-species biofilm formation on inanimate substrate"/>
    <property type="evidence" value="ECO:0000315"/>
    <property type="project" value="CGD"/>
</dbReference>
<dbReference type="GO" id="GO:0045944">
    <property type="term" value="P:positive regulation of transcription by RNA polymerase II"/>
    <property type="evidence" value="ECO:0000314"/>
    <property type="project" value="CGD"/>
</dbReference>
<dbReference type="GO" id="GO:0044011">
    <property type="term" value="P:single-species biofilm formation on inanimate substrate"/>
    <property type="evidence" value="ECO:0000315"/>
    <property type="project" value="CGD"/>
</dbReference>
<dbReference type="GO" id="GO:0006368">
    <property type="term" value="P:transcription elongation by RNA polymerase II"/>
    <property type="evidence" value="ECO:0007669"/>
    <property type="project" value="EnsemblFungi"/>
</dbReference>
<dbReference type="CDD" id="cd11395">
    <property type="entry name" value="bHLHzip_SREBP_like"/>
    <property type="match status" value="1"/>
</dbReference>
<dbReference type="FunFam" id="4.10.280.10:FF:000176">
    <property type="entry name" value="Carbohydrate metabolism regulator TYE7"/>
    <property type="match status" value="1"/>
</dbReference>
<dbReference type="Gene3D" id="4.10.280.10">
    <property type="entry name" value="Helix-loop-helix DNA-binding domain"/>
    <property type="match status" value="1"/>
</dbReference>
<dbReference type="InterPro" id="IPR011598">
    <property type="entry name" value="bHLH_dom"/>
</dbReference>
<dbReference type="InterPro" id="IPR036638">
    <property type="entry name" value="HLH_DNA-bd_sf"/>
</dbReference>
<dbReference type="InterPro" id="IPR052099">
    <property type="entry name" value="Regulatory_TF_Diverse"/>
</dbReference>
<dbReference type="PANTHER" id="PTHR47336:SF3">
    <property type="entry name" value="SERINE-RICH PROTEIN TYE7"/>
    <property type="match status" value="1"/>
</dbReference>
<dbReference type="PANTHER" id="PTHR47336">
    <property type="entry name" value="TRANSCRIPTION FACTOR HMS1-RELATED"/>
    <property type="match status" value="1"/>
</dbReference>
<dbReference type="Pfam" id="PF00010">
    <property type="entry name" value="HLH"/>
    <property type="match status" value="1"/>
</dbReference>
<dbReference type="SMART" id="SM00353">
    <property type="entry name" value="HLH"/>
    <property type="match status" value="1"/>
</dbReference>
<dbReference type="SUPFAM" id="SSF47459">
    <property type="entry name" value="HLH, helix-loop-helix DNA-binding domain"/>
    <property type="match status" value="1"/>
</dbReference>
<dbReference type="PROSITE" id="PS50888">
    <property type="entry name" value="BHLH"/>
    <property type="match status" value="1"/>
</dbReference>
<name>TYE7_CANAL</name>
<accession>Q5AL36</accession>
<accession>A0A1D8PFK6</accession>
<sequence>MSSFQQENQLNANNNNNNVMNEYISYSVPLSPVTTNENPQDYWMNGLIANSVPISQTTSNSDINYSQPPNPINFNSIFEGVNIFSNDDFTSSSNDISLANSPETNATSDSIAQNLDEVKVKLENHNQARLDALEFAFETKSILKEQPKIKQEPGTKAATKPKRRAPRKKLTESQKKAHNKIEKRYRININAKIAGIQKIIPWVAFEKTAFETGEENETEAEAKNNTRLNKSMILEKATEYILHLQKKEEEYMAENQKLREQVIKLGGEI</sequence>
<evidence type="ECO:0000255" key="1">
    <source>
        <dbReference type="PROSITE-ProRule" id="PRU00981"/>
    </source>
</evidence>
<evidence type="ECO:0000256" key="2">
    <source>
        <dbReference type="SAM" id="MobiDB-lite"/>
    </source>
</evidence>
<evidence type="ECO:0000269" key="3">
    <source>
    </source>
</evidence>
<evidence type="ECO:0000269" key="4">
    <source>
    </source>
</evidence>
<evidence type="ECO:0000269" key="5">
    <source>
    </source>
</evidence>
<evidence type="ECO:0000269" key="6">
    <source>
    </source>
</evidence>
<evidence type="ECO:0000269" key="7">
    <source>
    </source>
</evidence>
<evidence type="ECO:0000269" key="8">
    <source>
    </source>
</evidence>
<evidence type="ECO:0000269" key="9">
    <source>
    </source>
</evidence>
<evidence type="ECO:0000269" key="10">
    <source>
    </source>
</evidence>
<feature type="chain" id="PRO_0000422813" description="Carbohydrate metabolism regulator TYE7">
    <location>
        <begin position="1"/>
        <end position="269"/>
    </location>
</feature>
<feature type="domain" description="bHLH" evidence="1">
    <location>
        <begin position="173"/>
        <end position="244"/>
    </location>
</feature>
<feature type="region of interest" description="Disordered" evidence="2">
    <location>
        <begin position="146"/>
        <end position="178"/>
    </location>
</feature>
<feature type="compositionally biased region" description="Basic residues" evidence="2">
    <location>
        <begin position="159"/>
        <end position="168"/>
    </location>
</feature>
<feature type="compositionally biased region" description="Basic and acidic residues" evidence="2">
    <location>
        <begin position="169"/>
        <end position="178"/>
    </location>
</feature>
<keyword id="KW-0119">Carbohydrate metabolism</keyword>
<keyword id="KW-0539">Nucleus</keyword>
<keyword id="KW-1185">Reference proteome</keyword>
<keyword id="KW-0804">Transcription</keyword>
<keyword id="KW-0805">Transcription regulation</keyword>
<keyword id="KW-0843">Virulence</keyword>
<organism>
    <name type="scientific">Candida albicans (strain SC5314 / ATCC MYA-2876)</name>
    <name type="common">Yeast</name>
    <dbReference type="NCBI Taxonomy" id="237561"/>
    <lineage>
        <taxon>Eukaryota</taxon>
        <taxon>Fungi</taxon>
        <taxon>Dikarya</taxon>
        <taxon>Ascomycota</taxon>
        <taxon>Saccharomycotina</taxon>
        <taxon>Pichiomycetes</taxon>
        <taxon>Debaryomycetaceae</taxon>
        <taxon>Candida/Lodderomyces clade</taxon>
        <taxon>Candida</taxon>
    </lineage>
</organism>
<protein>
    <recommendedName>
        <fullName>Carbohydrate metabolism regulator TYE7</fullName>
    </recommendedName>
</protein>
<gene>
    <name type="primary">TYE7</name>
    <name type="ordered locus">CAALFM_C113140CA</name>
    <name type="ORF">CaO19.12407</name>
    <name type="ORF">CaO19.4941</name>
</gene>
<comment type="function">
    <text evidence="9 10">Key transcriptional regulator of carbohydrate metabolism. Binds the promoter sequences of the glycolytic genes at the CANNTG motif and activates their expression during growth on either fermentable or non-fermentable carbon sources as well as under hypoxic growth conditions. Complete glycolytic activation by GAL4 and TYE7 is required for full virulence. Involved in biofilm formation and negatively regulates hyphal formation under hypoxia. Also controls the expression of the copper transport protein CTR1.</text>
</comment>
<comment type="subunit">
    <text>Efficient DNA binding requires dimerization with another bHLH protein.</text>
</comment>
<comment type="subcellular location">
    <subcellularLocation>
        <location>Nucleus</location>
    </subcellularLocation>
</comment>
<comment type="induction">
    <text evidence="3 4 5 6 7 8">Expression is controlled by RTG1 and is down-regulated during mating process, yeast-to-hyphal transition, and in presence of benomyl, amphotericin B, and caspofungin.</text>
</comment>
<proteinExistence type="evidence at protein level"/>